<accession>Q13702</accession>
<accession>Q8TDF3</accession>
<accession>Q9BTD9</accession>
<feature type="initiator methionine" description="Removed">
    <location>
        <position position="1"/>
    </location>
</feature>
<feature type="chain" id="PRO_0000167591" description="43 kDa receptor-associated protein of the synapse">
    <location>
        <begin position="2"/>
        <end position="412"/>
    </location>
</feature>
<feature type="repeat" description="TPR 1">
    <location>
        <begin position="6"/>
        <end position="39"/>
    </location>
</feature>
<feature type="repeat" description="TPR 2">
    <location>
        <begin position="83"/>
        <end position="116"/>
    </location>
</feature>
<feature type="repeat" description="TPR 3">
    <location>
        <begin position="123"/>
        <end position="156"/>
    </location>
</feature>
<feature type="repeat" description="TPR 4">
    <location>
        <begin position="163"/>
        <end position="196"/>
    </location>
</feature>
<feature type="repeat" description="TPR 5">
    <location>
        <begin position="206"/>
        <end position="239"/>
    </location>
</feature>
<feature type="repeat" description="TPR 6">
    <location>
        <begin position="246"/>
        <end position="279"/>
    </location>
</feature>
<feature type="repeat" description="TPR 7">
    <location>
        <begin position="286"/>
        <end position="319"/>
    </location>
</feature>
<feature type="zinc finger region" description="RING-type" evidence="3">
    <location>
        <begin position="363"/>
        <end position="403"/>
    </location>
</feature>
<feature type="modified residue" description="Phosphotyrosine" evidence="2">
    <location>
        <position position="196"/>
    </location>
</feature>
<feature type="modified residue" description="Phosphoserine" evidence="2">
    <location>
        <position position="405"/>
    </location>
</feature>
<feature type="lipid moiety-binding region" description="N-myristoyl glycine" evidence="1">
    <location>
        <position position="2"/>
    </location>
</feature>
<feature type="splice variant" id="VSP_005533" description="In isoform 2." evidence="17">
    <location>
        <begin position="264"/>
        <end position="322"/>
    </location>
</feature>
<feature type="sequence variant" id="VAR_043897" description="In dbSNP:rs11556408." evidence="11">
    <original>Q</original>
    <variation>K</variation>
    <location>
        <position position="8"/>
    </location>
</feature>
<feature type="sequence variant" id="VAR_021216" description="In CMS11; dbSNP:rs104894300." evidence="4 5 7">
    <original>L</original>
    <variation>P</variation>
    <location>
        <position position="14"/>
    </location>
</feature>
<feature type="sequence variant" id="VAR_043898" description="In CMS11; reduced coclustering with acetylcholine receptor; dbSNP:rs121909254." evidence="13">
    <original>V</original>
    <variation>M</variation>
    <location>
        <position position="45"/>
    </location>
</feature>
<feature type="sequence variant" id="VAR_062142" description="In dbSNP:rs57878668.">
    <original>F</original>
    <variation>L</variation>
    <location>
        <position position="81"/>
    </location>
</feature>
<feature type="sequence variant" id="VAR_021217" description="In CMS11; dbSNP:rs104894299." evidence="4 5 6 7 8 9 10">
    <original>N</original>
    <variation>K</variation>
    <location>
        <position position="88"/>
    </location>
</feature>
<feature type="sequence variant" id="VAR_043899" description="In FADS2; dbSNP:rs121909256." evidence="15">
    <original>F</original>
    <variation>S</variation>
    <location>
        <position position="139"/>
    </location>
</feature>
<feature type="sequence variant" id="VAR_043900" description="In CMS11; reduced coclustering with acetylcholine receptor; dbSNP:rs121909255." evidence="13">
    <original>E</original>
    <variation>K</variation>
    <location>
        <position position="162"/>
    </location>
</feature>
<feature type="sequence variant" id="VAR_043901" description="In CMS11; reduced coclustering with acetylcholine receptor; dbSNP:rs104894294." evidence="12">
    <original>R</original>
    <variation>C</variation>
    <location>
        <position position="164"/>
    </location>
</feature>
<feature type="sequence variant" id="VAR_043902" description="In FADS2; dbSNP:rs121909257." evidence="15">
    <original>A</original>
    <variation>V</variation>
    <location>
        <position position="189"/>
    </location>
</feature>
<feature type="sequence variant" id="VAR_043903" description="In CMS11; reduced coclustering with acetylcholine receptor; dbSNP:rs104894293." evidence="12">
    <original>L</original>
    <variation>P</variation>
    <location>
        <position position="283"/>
    </location>
</feature>
<feature type="sequence conflict" description="In Ref. 1; CAA83954." evidence="18" ref="1">
    <original>L</original>
    <variation>V</variation>
    <location>
        <position position="112"/>
    </location>
</feature>
<feature type="sequence conflict" description="In Ref. 1; CAA83954." evidence="18" ref="1">
    <original>A</original>
    <variation>T</variation>
    <location>
        <position position="159"/>
    </location>
</feature>
<feature type="sequence conflict" description="In Ref. 1; CAA83954." evidence="18" ref="1">
    <original>R</original>
    <variation>Q</variation>
    <location>
        <position position="205"/>
    </location>
</feature>
<feature type="sequence conflict" description="In Ref. 1; CAA83954." evidence="18" ref="1">
    <original>G</original>
    <variation>A</variation>
    <location>
        <position position="364"/>
    </location>
</feature>
<gene>
    <name type="primary">RAPSN</name>
    <name type="synonym">RNF205</name>
</gene>
<reference key="1">
    <citation type="journal article" date="1996" name="Genomics">
        <title>Cloning of cDNA encoding human rapsyn and mapping of the RAPSN gene locus to chromosome 11p11.2-p11.1.</title>
        <authorList>
            <person name="Buckel A."/>
            <person name="Beeson D."/>
            <person name="James M."/>
            <person name="Vincent A."/>
        </authorList>
    </citation>
    <scope>NUCLEOTIDE SEQUENCE [MRNA] (ISOFORM 1)</scope>
    <source>
        <tissue>Muscle</tissue>
    </source>
</reference>
<reference key="2">
    <citation type="journal article" date="2002" name="Am. J. Hum. Genet.">
        <title>Rapsyn mutations in humans cause endplate acetylcholine-receptor deficiency and myasthenic syndrome.</title>
        <authorList>
            <person name="Ohno K."/>
            <person name="Engel A.G."/>
            <person name="Shen X.-M."/>
            <person name="Selcen D."/>
            <person name="Brengman J."/>
            <person name="Harper C.M."/>
            <person name="Tsujino A."/>
            <person name="Milone M."/>
        </authorList>
    </citation>
    <scope>NUCLEOTIDE SEQUENCE [MRNA] (ISOFORM 1)</scope>
    <scope>VARIANTS CMS11 PRO-14 AND LYS-88</scope>
</reference>
<reference key="3">
    <citation type="submission" date="2005-09" db="EMBL/GenBank/DDBJ databases">
        <authorList>
            <person name="Mural R.J."/>
            <person name="Istrail S."/>
            <person name="Sutton G.G."/>
            <person name="Florea L."/>
            <person name="Halpern A.L."/>
            <person name="Mobarry C.M."/>
            <person name="Lippert R."/>
            <person name="Walenz B."/>
            <person name="Shatkay H."/>
            <person name="Dew I."/>
            <person name="Miller J.R."/>
            <person name="Flanigan M.J."/>
            <person name="Edwards N.J."/>
            <person name="Bolanos R."/>
            <person name="Fasulo D."/>
            <person name="Halldorsson B.V."/>
            <person name="Hannenhalli S."/>
            <person name="Turner R."/>
            <person name="Yooseph S."/>
            <person name="Lu F."/>
            <person name="Nusskern D.R."/>
            <person name="Shue B.C."/>
            <person name="Zheng X.H."/>
            <person name="Zhong F."/>
            <person name="Delcher A.L."/>
            <person name="Huson D.H."/>
            <person name="Kravitz S.A."/>
            <person name="Mouchard L."/>
            <person name="Reinert K."/>
            <person name="Remington K.A."/>
            <person name="Clark A.G."/>
            <person name="Waterman M.S."/>
            <person name="Eichler E.E."/>
            <person name="Adams M.D."/>
            <person name="Hunkapiller M.W."/>
            <person name="Myers E.W."/>
            <person name="Venter J.C."/>
        </authorList>
    </citation>
    <scope>NUCLEOTIDE SEQUENCE [LARGE SCALE GENOMIC DNA]</scope>
</reference>
<reference key="4">
    <citation type="journal article" date="2004" name="Genome Res.">
        <title>The status, quality, and expansion of the NIH full-length cDNA project: the Mammalian Gene Collection (MGC).</title>
        <authorList>
            <consortium name="The MGC Project Team"/>
        </authorList>
    </citation>
    <scope>NUCLEOTIDE SEQUENCE [LARGE SCALE MRNA] (ISOFORM 2)</scope>
    <scope>VARIANT LYS-8</scope>
    <source>
        <tissue>Muscle</tissue>
    </source>
</reference>
<reference key="5">
    <citation type="journal article" date="2009" name="J. Biol. Chem.">
        <title>Control of rapsyn stability by the CUL-3-containing E3 ligase complex.</title>
        <authorList>
            <person name="Nam S."/>
            <person name="Min K."/>
            <person name="Hwang H."/>
            <person name="Lee H.O."/>
            <person name="Lee J.H."/>
            <person name="Yoon J."/>
            <person name="Lee H."/>
            <person name="Park S."/>
            <person name="Lee J."/>
        </authorList>
    </citation>
    <scope>UBIQUITINATION BY THE BCR(KLHL8) COMPLEX</scope>
</reference>
<reference key="6">
    <citation type="journal article" date="2003" name="J. Hum. Genet.">
        <title>Identification of pathogenic mutations in the human rapsyn gene.</title>
        <authorList>
            <person name="Dunne V."/>
            <person name="Maselli R.A."/>
        </authorList>
    </citation>
    <scope>VARIANTS CMS11 PRO-14 AND LYS-88</scope>
</reference>
<reference key="7">
    <citation type="journal article" date="2003" name="Muscle Nerve">
        <title>Rapsyn mutations in myasthenic syndrome due to impaired receptor clustering.</title>
        <authorList>
            <person name="Maselli R.A."/>
            <person name="Dunne V."/>
            <person name="Pascual-Pascual S.I."/>
            <person name="Bowe C."/>
            <person name="Agius M."/>
            <person name="Frank R."/>
            <person name="Wollmann R.L."/>
        </authorList>
    </citation>
    <scope>VARIANTS CMS11 PRO-14 AND LYS-88</scope>
</reference>
<reference key="8">
    <citation type="journal article" date="2003" name="Neurology">
        <title>Rapsyn N88K is a frequent cause of congenital myasthenic syndromes in European patients.</title>
        <authorList>
            <person name="Mueller J.S."/>
            <person name="Mildner G."/>
            <person name="Mueller-Felber W."/>
            <person name="Schara U."/>
            <person name="Krampfl K."/>
            <person name="Petersen B."/>
            <person name="Petrova S."/>
            <person name="Stucka R."/>
            <person name="Mortier W."/>
            <person name="Bufler J."/>
            <person name="Kurlemann G."/>
            <person name="Huebner A."/>
            <person name="Merlini L."/>
            <person name="Lochmuller H."/>
            <person name="Abicht A."/>
        </authorList>
    </citation>
    <scope>VARIANT CMS11 LYS-88</scope>
</reference>
<reference key="9">
    <citation type="journal article" date="2003" name="Neurology">
        <title>Rapsyn mutations in hereditary myasthenia: distinct early- and late-onset phenotypes.</title>
        <authorList>
            <person name="Burke G."/>
            <person name="Cossins J."/>
            <person name="Maxwell S."/>
            <person name="Owens G."/>
            <person name="Vincent A."/>
            <person name="Robb S."/>
            <person name="Nicolle M."/>
            <person name="Hilton-Jones D."/>
            <person name="Newsom-Davis J."/>
            <person name="Palace J."/>
            <person name="Beeson D."/>
        </authorList>
    </citation>
    <scope>VARIANT CMS11 LYS-88</scope>
</reference>
<reference key="10">
    <citation type="journal article" date="2004" name="Neuromuscul. Disord.">
        <title>Novel truncating RAPSN mutations causing congenital myasthenic syndrome responsive to 3,4-diaminopyridine.</title>
        <authorList>
            <person name="Banwell B.L."/>
            <person name="Ohno K."/>
            <person name="Sieb J.P."/>
            <person name="Engel A.G."/>
        </authorList>
    </citation>
    <scope>VARIANT CMS11 LYS-88</scope>
</reference>
<reference key="11">
    <citation type="journal article" date="2004" name="Neuropediatrics">
        <title>Congenital myasthenic syndrome due to rapsyn deficiency: three cases with arthrogryposis and bulbar symptoms.</title>
        <authorList>
            <person name="Ioos C."/>
            <person name="Barois A."/>
            <person name="Richard P."/>
            <person name="Eymard B."/>
            <person name="Hantai D."/>
            <person name="Estournet-Mathiaud B."/>
        </authorList>
    </citation>
    <scope>VARIANT CMS11 LYS-88</scope>
</reference>
<reference key="12">
    <citation type="journal article" date="2006" name="Neurology">
        <title>Impaired receptor clustering in congenital myasthenic syndrome with novel RAPSN mutations.</title>
        <authorList>
            <person name="Mueller J.S."/>
            <person name="Baumeister S.K."/>
            <person name="Rasic V.M."/>
            <person name="Krause S."/>
            <person name="Todorovic S."/>
            <person name="Kugler K."/>
            <person name="Mueller-Felber W."/>
            <person name="Abicht A."/>
            <person name="Lochmueller H."/>
        </authorList>
    </citation>
    <scope>VARIANTS CMS11 CYS-164 AND PRO-283</scope>
    <scope>CHARACTERIZATION OF VARIANTS CMS11 CYS-164 AND PRO-283</scope>
</reference>
<reference key="13">
    <citation type="journal article" date="2007" name="Clin. Genet.">
        <title>Congenital myasthenic syndrome caused by two non-N88K rapsyn mutations.</title>
        <authorList>
            <person name="Maselli R.A."/>
            <person name="Dris H."/>
            <person name="Schnier J."/>
            <person name="Cockrell J.L."/>
            <person name="Wollmann R.L."/>
        </authorList>
    </citation>
    <scope>VARIANTS CMS11 MET-45 AND LYS-162</scope>
    <scope>CHARACTERIZATION OF VARIANTS CMS11 MET-45 AND LYS-162</scope>
</reference>
<reference key="14">
    <citation type="journal article" date="2008" name="Am. J. Hum. Genet.">
        <title>Mutation analysis of CHRNA1, CHRNB1, CHRND, and RAPSN genes in multiple pterygium syndrome/fetal akinesia patients.</title>
        <authorList>
            <person name="Vogt J."/>
            <person name="Harrison B.J."/>
            <person name="Spearman H."/>
            <person name="Cossins J."/>
            <person name="Vermeer S."/>
            <person name="ten Cate L.N."/>
            <person name="Morgan N.V."/>
            <person name="Beeson D."/>
            <person name="Maher E.R."/>
        </authorList>
    </citation>
    <scope>INVOLVEMENT IN FADS2</scope>
</reference>
<reference key="15">
    <citation type="journal article" date="2008" name="Am. J. Hum. Genet.">
        <title>Acetylcholine receptor pathway mutations explain various fetal akinesia deformation sequence disorders.</title>
        <authorList>
            <person name="Michalk A."/>
            <person name="Stricker S."/>
            <person name="Becker J."/>
            <person name="Rupps R."/>
            <person name="Pantzar T."/>
            <person name="Miertus J."/>
            <person name="Botta G."/>
            <person name="Naretto V.G."/>
            <person name="Janetzki C."/>
            <person name="Yaqoob N."/>
            <person name="Ott C.-E."/>
            <person name="Seelow D."/>
            <person name="Wieczorek D."/>
            <person name="Fiebig B."/>
            <person name="Wirth B."/>
            <person name="Hoopmann M."/>
            <person name="Walther M."/>
            <person name="Koerber F."/>
            <person name="Blankenburg M."/>
            <person name="Mundlos S."/>
            <person name="Heller R."/>
            <person name="Hoffmann K."/>
        </authorList>
    </citation>
    <scope>VARIANTS FADS2 SER-139 AND VAL-189</scope>
</reference>
<comment type="function">
    <text>Postsynaptic protein required for clustering of nicotinic acetylcholine receptors (nAChRs) at the neuromuscular junction. It may link the receptor to the underlying postsynaptic cytoskeleton, possibly by direct association with actin or spectrin.</text>
</comment>
<comment type="interaction">
    <interactant intactId="EBI-22012855">
        <id>Q13702-2</id>
    </interactant>
    <interactant intactId="EBI-930964">
        <id>P54253</id>
        <label>ATXN1</label>
    </interactant>
    <organismsDiffer>false</organismsDiffer>
    <experiments>6</experiments>
</comment>
<comment type="interaction">
    <interactant intactId="EBI-22012855">
        <id>Q13702-2</id>
    </interactant>
    <interactant intactId="EBI-466029">
        <id>P42858</id>
        <label>HTT</label>
    </interactant>
    <organismsDiffer>false</organismsDiffer>
    <experiments>18</experiments>
</comment>
<comment type="interaction">
    <interactant intactId="EBI-22012855">
        <id>Q13702-2</id>
    </interactant>
    <interactant intactId="EBI-748974">
        <id>Q96CV9</id>
        <label>OPTN</label>
    </interactant>
    <organismsDiffer>false</organismsDiffer>
    <experiments>3</experiments>
</comment>
<comment type="interaction">
    <interactant intactId="EBI-22012855">
        <id>Q13702-2</id>
    </interactant>
    <interactant intactId="EBI-350723">
        <id>P50454</id>
        <label>SERPINH1</label>
    </interactant>
    <organismsDiffer>false</organismsDiffer>
    <experiments>3</experiments>
</comment>
<comment type="interaction">
    <interactant intactId="EBI-22012855">
        <id>Q13702-2</id>
    </interactant>
    <interactant intactId="EBI-985879">
        <id>P37840</id>
        <label>SNCA</label>
    </interactant>
    <organismsDiffer>false</organismsDiffer>
    <experiments>3</experiments>
</comment>
<comment type="interaction">
    <interactant intactId="EBI-22012855">
        <id>Q13702-2</id>
    </interactant>
    <interactant intactId="EBI-296151">
        <id>P37173</id>
        <label>TGFBR2</label>
    </interactant>
    <organismsDiffer>false</organismsDiffer>
    <experiments>3</experiments>
</comment>
<comment type="subcellular location">
    <subcellularLocation>
        <location>Cell membrane</location>
        <topology>Peripheral membrane protein</topology>
        <orientation>Cytoplasmic side</orientation>
    </subcellularLocation>
    <subcellularLocation>
        <location>Postsynaptic cell membrane</location>
        <topology>Peripheral membrane protein</topology>
        <orientation>Cytoplasmic side</orientation>
    </subcellularLocation>
    <subcellularLocation>
        <location>Cytoplasm</location>
        <location>Cytoskeleton</location>
    </subcellularLocation>
    <text>Cytoplasmic surface of postsynaptic membranes.</text>
</comment>
<comment type="alternative products">
    <event type="alternative splicing"/>
    <isoform>
        <id>Q13702-1</id>
        <name>1</name>
        <sequence type="displayed"/>
    </isoform>
    <isoform>
        <id>Q13702-2</id>
        <name>2</name>
        <sequence type="described" ref="VSP_005533"/>
    </isoform>
</comment>
<comment type="domain">
    <text>A cysteine-rich region homologous to part of the regulatory domain of protein kinase C may be important in interactions of this protein with the lipid bilayer.</text>
</comment>
<comment type="PTM">
    <text evidence="16">Ubiquitinated by the BCR(KLHL8) complex, leading to its degradation.</text>
</comment>
<comment type="disease" evidence="4 5 6 7 8 9 10 12 13">
    <disease id="DI-04401">
        <name>Myasthenic syndrome, congenital, 11, associated with acetylcholine receptor deficiency</name>
        <acronym>CMS11</acronym>
        <description>A form of congenital myasthenic syndrome, a group of disorders characterized by failure of neuromuscular transmission, including pre-synaptic, synaptic, and post-synaptic disorders that are not of autoimmune origin. Clinical features are easy fatigability and muscle weakness affecting the axial and limb muscles (with hypotonia in early-onset forms), the ocular muscles (leading to ptosis and ophthalmoplegia), and the facial and bulbar musculature (affecting sucking and swallowing, and leading to dysphonia). The symptoms fluctuate and worsen with physical effort. CMS11 is an autosomal recessive disorder of postsynaptic neuromuscular transmission, due to deficiency of AChR at the endplate that results in low amplitude of the miniature endplate potential and current.</description>
        <dbReference type="MIM" id="616326"/>
    </disease>
    <text>The disease is caused by variants affecting the gene represented in this entry.</text>
</comment>
<comment type="disease" evidence="14 15">
    <disease id="DI-05535">
        <name>Fetal akinesia deformation sequence 2</name>
        <acronym>FADS2</acronym>
        <description>A clinically and genetically heterogeneous group of disorders with congenital malformations related to impaired fetal movement. Clinical features include fetal akinesia, intrauterine growth retardation, polyhydramnios, arthrogryposis, pulmonary hypoplasia, craniofacial abnormalities, and cryptorchidism. FADS2 inheritance is autosomal recessive.</description>
        <dbReference type="MIM" id="618388"/>
    </disease>
    <text>The disease is caused by variants affecting the gene represented in this entry.</text>
</comment>
<comment type="similarity">
    <text evidence="18">Belongs to the RAPsyn family.</text>
</comment>
<sequence length="412" mass="46328">MGQDQTKQQIEKGLQLYQSNQTEKALQVWTKVLEKSSDLMGRFRVLGCLVTAHSEMGRYKEMLKFAVVQIDTARELEDADFLLESYLNLARSNEKLCEFHKTISYCKTCLGLPGTRAGAQLGGQVSLSMGNAFLGLSVFQKALESFEKALRYAHNNDDAMLECRVCCSLGSFYAQVKDYEKALFFPCKAAELVNNYGKGWSLKYRAMSQYHMAVAYRLLGRLGSAMECCEESMKIALQHGDRPLQALCLLCFADIHRSRGDLETAFPRYDSAMSIMTEIGNRLGQVQALLGVAKCWVARKALDKALDAIERAQDLAEEVGNKLSQLKLHCLSESIYRSKGLQRELRAHVVRFHECVEETELYCGLCGESIGEKNSRLQALPCSHIFHLRCLQNNGTRSCPNCRRSSMKPGFV</sequence>
<protein>
    <recommendedName>
        <fullName>43 kDa receptor-associated protein of the synapse</fullName>
        <shortName>RAPsyn</shortName>
    </recommendedName>
    <alternativeName>
        <fullName>43 kDa postsynaptic protein</fullName>
    </alternativeName>
    <alternativeName>
        <fullName>Acetylcholine receptor-associated 43 kDa protein</fullName>
    </alternativeName>
    <alternativeName>
        <fullName>RING finger protein 205</fullName>
    </alternativeName>
</protein>
<evidence type="ECO:0000250" key="1"/>
<evidence type="ECO:0000255" key="2"/>
<evidence type="ECO:0000255" key="3">
    <source>
        <dbReference type="PROSITE-ProRule" id="PRU00175"/>
    </source>
</evidence>
<evidence type="ECO:0000269" key="4">
    <source>
    </source>
</evidence>
<evidence type="ECO:0000269" key="5">
    <source>
    </source>
</evidence>
<evidence type="ECO:0000269" key="6">
    <source>
    </source>
</evidence>
<evidence type="ECO:0000269" key="7">
    <source>
    </source>
</evidence>
<evidence type="ECO:0000269" key="8">
    <source>
    </source>
</evidence>
<evidence type="ECO:0000269" key="9">
    <source>
    </source>
</evidence>
<evidence type="ECO:0000269" key="10">
    <source>
    </source>
</evidence>
<evidence type="ECO:0000269" key="11">
    <source>
    </source>
</evidence>
<evidence type="ECO:0000269" key="12">
    <source>
    </source>
</evidence>
<evidence type="ECO:0000269" key="13">
    <source>
    </source>
</evidence>
<evidence type="ECO:0000269" key="14">
    <source>
    </source>
</evidence>
<evidence type="ECO:0000269" key="15">
    <source>
    </source>
</evidence>
<evidence type="ECO:0000269" key="16">
    <source>
    </source>
</evidence>
<evidence type="ECO:0000303" key="17">
    <source>
    </source>
</evidence>
<evidence type="ECO:0000305" key="18"/>
<dbReference type="EMBL" id="Z33905">
    <property type="protein sequence ID" value="CAA83954.1"/>
    <property type="molecule type" value="mRNA"/>
</dbReference>
<dbReference type="EMBL" id="AF449218">
    <property type="protein sequence ID" value="AAL86639.1"/>
    <property type="molecule type" value="mRNA"/>
</dbReference>
<dbReference type="EMBL" id="CH471064">
    <property type="protein sequence ID" value="EAW67914.1"/>
    <property type="molecule type" value="Genomic_DNA"/>
</dbReference>
<dbReference type="EMBL" id="BC004196">
    <property type="protein sequence ID" value="AAH04196.1"/>
    <property type="molecule type" value="mRNA"/>
</dbReference>
<dbReference type="CCDS" id="CCDS7936.1">
    <molecule id="Q13702-1"/>
</dbReference>
<dbReference type="CCDS" id="CCDS7937.1">
    <molecule id="Q13702-2"/>
</dbReference>
<dbReference type="PIR" id="S45064">
    <property type="entry name" value="S45064"/>
</dbReference>
<dbReference type="RefSeq" id="NP_005046.2">
    <molecule id="Q13702-1"/>
    <property type="nucleotide sequence ID" value="NM_005055.4"/>
</dbReference>
<dbReference type="RefSeq" id="NP_116034.2">
    <molecule id="Q13702-2"/>
    <property type="nucleotide sequence ID" value="NM_032645.4"/>
</dbReference>
<dbReference type="SMR" id="Q13702"/>
<dbReference type="BioGRID" id="111848">
    <property type="interactions" value="22"/>
</dbReference>
<dbReference type="FunCoup" id="Q13702">
    <property type="interactions" value="424"/>
</dbReference>
<dbReference type="IntAct" id="Q13702">
    <property type="interactions" value="18"/>
</dbReference>
<dbReference type="STRING" id="9606.ENSP00000298854"/>
<dbReference type="ChEMBL" id="CHEMBL2163166"/>
<dbReference type="iPTMnet" id="Q13702"/>
<dbReference type="PhosphoSitePlus" id="Q13702"/>
<dbReference type="BioMuta" id="RAPSN"/>
<dbReference type="DMDM" id="145559521"/>
<dbReference type="MassIVE" id="Q13702"/>
<dbReference type="PaxDb" id="9606-ENSP00000298854"/>
<dbReference type="PeptideAtlas" id="Q13702"/>
<dbReference type="ProteomicsDB" id="59664">
    <molecule id="Q13702-1"/>
</dbReference>
<dbReference type="ProteomicsDB" id="59665">
    <molecule id="Q13702-2"/>
</dbReference>
<dbReference type="Antibodypedia" id="13774">
    <property type="antibodies" value="172 antibodies from 33 providers"/>
</dbReference>
<dbReference type="DNASU" id="5913"/>
<dbReference type="Ensembl" id="ENST00000298854.7">
    <molecule id="Q13702-1"/>
    <property type="protein sequence ID" value="ENSP00000298854.2"/>
    <property type="gene ID" value="ENSG00000165917.10"/>
</dbReference>
<dbReference type="Ensembl" id="ENST00000352508.7">
    <molecule id="Q13702-2"/>
    <property type="protein sequence ID" value="ENSP00000298853.3"/>
    <property type="gene ID" value="ENSG00000165917.10"/>
</dbReference>
<dbReference type="GeneID" id="5913"/>
<dbReference type="KEGG" id="hsa:5913"/>
<dbReference type="MANE-Select" id="ENST00000298854.7">
    <property type="protein sequence ID" value="ENSP00000298854.2"/>
    <property type="RefSeq nucleotide sequence ID" value="NM_005055.5"/>
    <property type="RefSeq protein sequence ID" value="NP_005046.2"/>
</dbReference>
<dbReference type="UCSC" id="uc001nfi.2">
    <molecule id="Q13702-1"/>
    <property type="organism name" value="human"/>
</dbReference>
<dbReference type="AGR" id="HGNC:9863"/>
<dbReference type="CTD" id="5913"/>
<dbReference type="DisGeNET" id="5913"/>
<dbReference type="GeneCards" id="RAPSN"/>
<dbReference type="GeneReviews" id="RAPSN"/>
<dbReference type="HGNC" id="HGNC:9863">
    <property type="gene designation" value="RAPSN"/>
</dbReference>
<dbReference type="HPA" id="ENSG00000165917">
    <property type="expression patterns" value="Group enriched (skeletal muscle, tongue)"/>
</dbReference>
<dbReference type="MalaCards" id="RAPSN"/>
<dbReference type="MIM" id="601592">
    <property type="type" value="gene"/>
</dbReference>
<dbReference type="MIM" id="616326">
    <property type="type" value="phenotype"/>
</dbReference>
<dbReference type="MIM" id="618388">
    <property type="type" value="phenotype"/>
</dbReference>
<dbReference type="neXtProt" id="NX_Q13702"/>
<dbReference type="OpenTargets" id="ENSG00000165917"/>
<dbReference type="Orphanet" id="994">
    <property type="disease" value="Fetal akinesia deformation sequence"/>
</dbReference>
<dbReference type="Orphanet" id="33108">
    <property type="disease" value="Lethal multiple pterygium syndrome"/>
</dbReference>
<dbReference type="Orphanet" id="98913">
    <property type="disease" value="Postsynaptic congenital myasthenic syndromes"/>
</dbReference>
<dbReference type="PharmGKB" id="PA34224"/>
<dbReference type="VEuPathDB" id="HostDB:ENSG00000165917"/>
<dbReference type="eggNOG" id="KOG1941">
    <property type="taxonomic scope" value="Eukaryota"/>
</dbReference>
<dbReference type="GeneTree" id="ENSGT00390000016785"/>
<dbReference type="HOGENOM" id="CLU_030911_0_0_1"/>
<dbReference type="InParanoid" id="Q13702"/>
<dbReference type="OMA" id="ALRCSHI"/>
<dbReference type="OrthoDB" id="10040854at2759"/>
<dbReference type="PAN-GO" id="Q13702">
    <property type="GO annotations" value="5 GO annotations based on evolutionary models"/>
</dbReference>
<dbReference type="PhylomeDB" id="Q13702"/>
<dbReference type="TreeFam" id="TF328344"/>
<dbReference type="PathwayCommons" id="Q13702"/>
<dbReference type="SignaLink" id="Q13702"/>
<dbReference type="SIGNOR" id="Q13702"/>
<dbReference type="BioGRID-ORCS" id="5913">
    <property type="hits" value="16 hits in 1189 CRISPR screens"/>
</dbReference>
<dbReference type="CD-CODE" id="3EAB04FE">
    <property type="entry name" value="Rapsn condensate"/>
</dbReference>
<dbReference type="GeneWiki" id="RAPSN"/>
<dbReference type="GenomeRNAi" id="5913"/>
<dbReference type="Pharos" id="Q13702">
    <property type="development level" value="Tbio"/>
</dbReference>
<dbReference type="PRO" id="PR:Q13702"/>
<dbReference type="Proteomes" id="UP000005640">
    <property type="component" value="Chromosome 11"/>
</dbReference>
<dbReference type="RNAct" id="Q13702">
    <property type="molecule type" value="protein"/>
</dbReference>
<dbReference type="Bgee" id="ENSG00000165917">
    <property type="expression patterns" value="Expressed in hindlimb stylopod muscle and 97 other cell types or tissues"/>
</dbReference>
<dbReference type="ExpressionAtlas" id="Q13702">
    <property type="expression patterns" value="baseline and differential"/>
</dbReference>
<dbReference type="GO" id="GO:0005813">
    <property type="term" value="C:centrosome"/>
    <property type="evidence" value="ECO:0000314"/>
    <property type="project" value="HPA"/>
</dbReference>
<dbReference type="GO" id="GO:0005829">
    <property type="term" value="C:cytosol"/>
    <property type="evidence" value="ECO:0000314"/>
    <property type="project" value="HPA"/>
</dbReference>
<dbReference type="GO" id="GO:0005794">
    <property type="term" value="C:Golgi apparatus"/>
    <property type="evidence" value="ECO:0007669"/>
    <property type="project" value="Ensembl"/>
</dbReference>
<dbReference type="GO" id="GO:0031594">
    <property type="term" value="C:neuromuscular junction"/>
    <property type="evidence" value="ECO:0000318"/>
    <property type="project" value="GO_Central"/>
</dbReference>
<dbReference type="GO" id="GO:0005886">
    <property type="term" value="C:plasma membrane"/>
    <property type="evidence" value="ECO:0000314"/>
    <property type="project" value="HPA"/>
</dbReference>
<dbReference type="GO" id="GO:0099634">
    <property type="term" value="C:postsynaptic specialization membrane"/>
    <property type="evidence" value="ECO:0007669"/>
    <property type="project" value="Ensembl"/>
</dbReference>
<dbReference type="GO" id="GO:0033130">
    <property type="term" value="F:acetylcholine receptor binding"/>
    <property type="evidence" value="ECO:0000314"/>
    <property type="project" value="MGI"/>
</dbReference>
<dbReference type="GO" id="GO:0035255">
    <property type="term" value="F:ionotropic glutamate receptor binding"/>
    <property type="evidence" value="ECO:0007669"/>
    <property type="project" value="Ensembl"/>
</dbReference>
<dbReference type="GO" id="GO:0043495">
    <property type="term" value="F:protein-membrane adaptor activity"/>
    <property type="evidence" value="ECO:0007669"/>
    <property type="project" value="InterPro"/>
</dbReference>
<dbReference type="GO" id="GO:0098879">
    <property type="term" value="F:structural constituent of postsynaptic specialization"/>
    <property type="evidence" value="ECO:0007669"/>
    <property type="project" value="Ensembl"/>
</dbReference>
<dbReference type="GO" id="GO:0008270">
    <property type="term" value="F:zinc ion binding"/>
    <property type="evidence" value="ECO:0007669"/>
    <property type="project" value="UniProtKB-KW"/>
</dbReference>
<dbReference type="GO" id="GO:0007268">
    <property type="term" value="P:chemical synaptic transmission"/>
    <property type="evidence" value="ECO:0000304"/>
    <property type="project" value="ProtInc"/>
</dbReference>
<dbReference type="GO" id="GO:1903540">
    <property type="term" value="P:establishment of protein localization to postsynaptic membrane"/>
    <property type="evidence" value="ECO:0007669"/>
    <property type="project" value="Ensembl"/>
</dbReference>
<dbReference type="GO" id="GO:0097049">
    <property type="term" value="P:motor neuron apoptotic process"/>
    <property type="evidence" value="ECO:0007669"/>
    <property type="project" value="Ensembl"/>
</dbReference>
<dbReference type="GO" id="GO:0099645">
    <property type="term" value="P:neurotransmitter receptor localization to postsynaptic specialization membrane"/>
    <property type="evidence" value="ECO:0007669"/>
    <property type="project" value="Ensembl"/>
</dbReference>
<dbReference type="GO" id="GO:2000673">
    <property type="term" value="P:positive regulation of motor neuron apoptotic process"/>
    <property type="evidence" value="ECO:0007669"/>
    <property type="project" value="Ensembl"/>
</dbReference>
<dbReference type="GO" id="GO:1900075">
    <property type="term" value="P:positive regulation of neuromuscular synaptic transmission"/>
    <property type="evidence" value="ECO:0000318"/>
    <property type="project" value="GO_Central"/>
</dbReference>
<dbReference type="GO" id="GO:1901626">
    <property type="term" value="P:regulation of postsynaptic membrane organization"/>
    <property type="evidence" value="ECO:0007669"/>
    <property type="project" value="Ensembl"/>
</dbReference>
<dbReference type="GO" id="GO:0071340">
    <property type="term" value="P:skeletal muscle acetylcholine-gated channel clustering"/>
    <property type="evidence" value="ECO:0007669"/>
    <property type="project" value="Ensembl"/>
</dbReference>
<dbReference type="GO" id="GO:0007271">
    <property type="term" value="P:synaptic transmission, cholinergic"/>
    <property type="evidence" value="ECO:0000316"/>
    <property type="project" value="MGI"/>
</dbReference>
<dbReference type="CDD" id="cd16478">
    <property type="entry name" value="RING-H2_Rapsyn"/>
    <property type="match status" value="1"/>
</dbReference>
<dbReference type="FunFam" id="1.25.40.10:FF:000123">
    <property type="entry name" value="43 kDa receptor-associated protein of the synapse"/>
    <property type="match status" value="1"/>
</dbReference>
<dbReference type="FunFam" id="1.25.40.10:FF:000206">
    <property type="entry name" value="43 kDa receptor-associated protein of the synapse"/>
    <property type="match status" value="1"/>
</dbReference>
<dbReference type="FunFam" id="3.30.40.10:FF:000275">
    <property type="entry name" value="43 kDa receptor-associated protein of the synapse"/>
    <property type="match status" value="1"/>
</dbReference>
<dbReference type="Gene3D" id="1.25.40.10">
    <property type="entry name" value="Tetratricopeptide repeat domain"/>
    <property type="match status" value="2"/>
</dbReference>
<dbReference type="Gene3D" id="3.30.40.10">
    <property type="entry name" value="Zinc/RING finger domain, C3HC4 (zinc finger)"/>
    <property type="match status" value="1"/>
</dbReference>
<dbReference type="InterPro" id="IPR001237">
    <property type="entry name" value="Postsynaptic"/>
</dbReference>
<dbReference type="InterPro" id="IPR018293">
    <property type="entry name" value="Postsynaptic_CS"/>
</dbReference>
<dbReference type="InterPro" id="IPR052480">
    <property type="entry name" value="RAPsyn"/>
</dbReference>
<dbReference type="InterPro" id="IPR019568">
    <property type="entry name" value="Rapsyn_myristoylation/link_N"/>
</dbReference>
<dbReference type="InterPro" id="IPR011990">
    <property type="entry name" value="TPR-like_helical_dom_sf"/>
</dbReference>
<dbReference type="InterPro" id="IPR019734">
    <property type="entry name" value="TPR_rpt"/>
</dbReference>
<dbReference type="InterPro" id="IPR001841">
    <property type="entry name" value="Znf_RING"/>
</dbReference>
<dbReference type="InterPro" id="IPR013083">
    <property type="entry name" value="Znf_RING/FYVE/PHD"/>
</dbReference>
<dbReference type="PANTHER" id="PTHR46574">
    <property type="entry name" value="43 KDA RECEPTOR-ASSOCIATED PROTEIN OF THE SYNAPSE"/>
    <property type="match status" value="1"/>
</dbReference>
<dbReference type="PANTHER" id="PTHR46574:SF1">
    <property type="entry name" value="43 KDA RECEPTOR-ASSOCIATED PROTEIN OF THE SYNAPSE"/>
    <property type="match status" value="1"/>
</dbReference>
<dbReference type="Pfam" id="PF10579">
    <property type="entry name" value="Rapsyn_N"/>
    <property type="match status" value="1"/>
</dbReference>
<dbReference type="Pfam" id="PF13181">
    <property type="entry name" value="TPR_8"/>
    <property type="match status" value="1"/>
</dbReference>
<dbReference type="Pfam" id="PF13639">
    <property type="entry name" value="zf-RING_2"/>
    <property type="match status" value="1"/>
</dbReference>
<dbReference type="PRINTS" id="PR00217">
    <property type="entry name" value="POSTSYNAPTIC"/>
</dbReference>
<dbReference type="SMART" id="SM00184">
    <property type="entry name" value="RING"/>
    <property type="match status" value="1"/>
</dbReference>
<dbReference type="SMART" id="SM00028">
    <property type="entry name" value="TPR"/>
    <property type="match status" value="7"/>
</dbReference>
<dbReference type="SUPFAM" id="SSF57850">
    <property type="entry name" value="RING/U-box"/>
    <property type="match status" value="1"/>
</dbReference>
<dbReference type="SUPFAM" id="SSF48452">
    <property type="entry name" value="TPR-like"/>
    <property type="match status" value="2"/>
</dbReference>
<dbReference type="PROSITE" id="PS00405">
    <property type="entry name" value="43_KD_POSTSYNAPTIC"/>
    <property type="match status" value="1"/>
</dbReference>
<dbReference type="PROSITE" id="PS50005">
    <property type="entry name" value="TPR"/>
    <property type="match status" value="5"/>
</dbReference>
<dbReference type="PROSITE" id="PS50293">
    <property type="entry name" value="TPR_REGION"/>
    <property type="match status" value="1"/>
</dbReference>
<dbReference type="PROSITE" id="PS50089">
    <property type="entry name" value="ZF_RING_2"/>
    <property type="match status" value="1"/>
</dbReference>
<organism>
    <name type="scientific">Homo sapiens</name>
    <name type="common">Human</name>
    <dbReference type="NCBI Taxonomy" id="9606"/>
    <lineage>
        <taxon>Eukaryota</taxon>
        <taxon>Metazoa</taxon>
        <taxon>Chordata</taxon>
        <taxon>Craniata</taxon>
        <taxon>Vertebrata</taxon>
        <taxon>Euteleostomi</taxon>
        <taxon>Mammalia</taxon>
        <taxon>Eutheria</taxon>
        <taxon>Euarchontoglires</taxon>
        <taxon>Primates</taxon>
        <taxon>Haplorrhini</taxon>
        <taxon>Catarrhini</taxon>
        <taxon>Hominidae</taxon>
        <taxon>Homo</taxon>
    </lineage>
</organism>
<proteinExistence type="evidence at protein level"/>
<keyword id="KW-0025">Alternative splicing</keyword>
<keyword id="KW-1003">Cell membrane</keyword>
<keyword id="KW-1004">Congenital myasthenic syndrome</keyword>
<keyword id="KW-0963">Cytoplasm</keyword>
<keyword id="KW-0206">Cytoskeleton</keyword>
<keyword id="KW-0225">Disease variant</keyword>
<keyword id="KW-0449">Lipoprotein</keyword>
<keyword id="KW-0472">Membrane</keyword>
<keyword id="KW-0479">Metal-binding</keyword>
<keyword id="KW-0519">Myristate</keyword>
<keyword id="KW-0597">Phosphoprotein</keyword>
<keyword id="KW-0628">Postsynaptic cell membrane</keyword>
<keyword id="KW-1267">Proteomics identification</keyword>
<keyword id="KW-1185">Reference proteome</keyword>
<keyword id="KW-0677">Repeat</keyword>
<keyword id="KW-0770">Synapse</keyword>
<keyword id="KW-0802">TPR repeat</keyword>
<keyword id="KW-0832">Ubl conjugation</keyword>
<keyword id="KW-0862">Zinc</keyword>
<keyword id="KW-0863">Zinc-finger</keyword>
<name>RAPSN_HUMAN</name>